<keyword id="KW-0687">Ribonucleoprotein</keyword>
<keyword id="KW-0689">Ribosomal protein</keyword>
<keyword id="KW-0694">RNA-binding</keyword>
<keyword id="KW-0699">rRNA-binding</keyword>
<organism>
    <name type="scientific">Mannheimia succiniciproducens (strain KCTC 0769BP / MBEL55E)</name>
    <dbReference type="NCBI Taxonomy" id="221988"/>
    <lineage>
        <taxon>Bacteria</taxon>
        <taxon>Pseudomonadati</taxon>
        <taxon>Pseudomonadota</taxon>
        <taxon>Gammaproteobacteria</taxon>
        <taxon>Pasteurellales</taxon>
        <taxon>Pasteurellaceae</taxon>
        <taxon>Basfia</taxon>
    </lineage>
</organism>
<evidence type="ECO:0000255" key="1">
    <source>
        <dbReference type="HAMAP-Rule" id="MF_00362"/>
    </source>
</evidence>
<evidence type="ECO:0000305" key="2"/>
<name>RL10_MANSM</name>
<reference key="1">
    <citation type="journal article" date="2004" name="Nat. Biotechnol.">
        <title>The genome sequence of the capnophilic rumen bacterium Mannheimia succiniciproducens.</title>
        <authorList>
            <person name="Hong S.H."/>
            <person name="Kim J.S."/>
            <person name="Lee S.Y."/>
            <person name="In Y.H."/>
            <person name="Choi S.S."/>
            <person name="Rih J.-K."/>
            <person name="Kim C.H."/>
            <person name="Jeong H."/>
            <person name="Hur C.G."/>
            <person name="Kim J.J."/>
        </authorList>
    </citation>
    <scope>NUCLEOTIDE SEQUENCE [LARGE SCALE GENOMIC DNA]</scope>
    <source>
        <strain>KCTC 0769BP / MBEL55E</strain>
    </source>
</reference>
<gene>
    <name evidence="1" type="primary">rplJ</name>
    <name type="ordered locus">MS0209</name>
</gene>
<accession>Q65W44</accession>
<protein>
    <recommendedName>
        <fullName evidence="1">Large ribosomal subunit protein uL10</fullName>
    </recommendedName>
    <alternativeName>
        <fullName evidence="2">50S ribosomal protein L10</fullName>
    </alternativeName>
</protein>
<sequence length="163" mass="17619">MALNLQDKQAIVAEVNEAAKGALSAVIADSRGVTVDKMTELRKTAREAGVSMRVVRNTLLRRAVEGTEFECLTDTFTGPTLIAFSNEHPGAAARLFKEFAKANDKFEIKGAAFEGKIQDVDFLATLPTYDEAIARLMGTIKEAAAGKLVRTFAALRDKLQEAA</sequence>
<dbReference type="EMBL" id="AE016827">
    <property type="protein sequence ID" value="AAU36816.1"/>
    <property type="molecule type" value="Genomic_DNA"/>
</dbReference>
<dbReference type="RefSeq" id="WP_011199391.1">
    <property type="nucleotide sequence ID" value="NC_006300.1"/>
</dbReference>
<dbReference type="SMR" id="Q65W44"/>
<dbReference type="STRING" id="221988.MS0209"/>
<dbReference type="KEGG" id="msu:MS0209"/>
<dbReference type="eggNOG" id="COG0244">
    <property type="taxonomic scope" value="Bacteria"/>
</dbReference>
<dbReference type="HOGENOM" id="CLU_092227_0_2_6"/>
<dbReference type="OrthoDB" id="9808307at2"/>
<dbReference type="Proteomes" id="UP000000607">
    <property type="component" value="Chromosome"/>
</dbReference>
<dbReference type="GO" id="GO:0015934">
    <property type="term" value="C:large ribosomal subunit"/>
    <property type="evidence" value="ECO:0007669"/>
    <property type="project" value="InterPro"/>
</dbReference>
<dbReference type="GO" id="GO:0070180">
    <property type="term" value="F:large ribosomal subunit rRNA binding"/>
    <property type="evidence" value="ECO:0007669"/>
    <property type="project" value="UniProtKB-UniRule"/>
</dbReference>
<dbReference type="GO" id="GO:0003735">
    <property type="term" value="F:structural constituent of ribosome"/>
    <property type="evidence" value="ECO:0007669"/>
    <property type="project" value="InterPro"/>
</dbReference>
<dbReference type="GO" id="GO:0006412">
    <property type="term" value="P:translation"/>
    <property type="evidence" value="ECO:0007669"/>
    <property type="project" value="UniProtKB-UniRule"/>
</dbReference>
<dbReference type="CDD" id="cd05797">
    <property type="entry name" value="Ribosomal_L10"/>
    <property type="match status" value="1"/>
</dbReference>
<dbReference type="FunFam" id="3.30.70.1730:FF:000001">
    <property type="entry name" value="50S ribosomal protein L10"/>
    <property type="match status" value="1"/>
</dbReference>
<dbReference type="Gene3D" id="3.30.70.1730">
    <property type="match status" value="1"/>
</dbReference>
<dbReference type="Gene3D" id="6.10.250.2350">
    <property type="match status" value="1"/>
</dbReference>
<dbReference type="HAMAP" id="MF_00362">
    <property type="entry name" value="Ribosomal_uL10"/>
    <property type="match status" value="1"/>
</dbReference>
<dbReference type="InterPro" id="IPR001790">
    <property type="entry name" value="Ribosomal_uL10"/>
</dbReference>
<dbReference type="InterPro" id="IPR043141">
    <property type="entry name" value="Ribosomal_uL10-like_sf"/>
</dbReference>
<dbReference type="InterPro" id="IPR022973">
    <property type="entry name" value="Ribosomal_uL10_bac"/>
</dbReference>
<dbReference type="InterPro" id="IPR047865">
    <property type="entry name" value="Ribosomal_uL10_bac_type"/>
</dbReference>
<dbReference type="InterPro" id="IPR002363">
    <property type="entry name" value="Ribosomal_uL10_CS_bac"/>
</dbReference>
<dbReference type="NCBIfam" id="NF000955">
    <property type="entry name" value="PRK00099.1-1"/>
    <property type="match status" value="1"/>
</dbReference>
<dbReference type="PANTHER" id="PTHR11560">
    <property type="entry name" value="39S RIBOSOMAL PROTEIN L10, MITOCHONDRIAL"/>
    <property type="match status" value="1"/>
</dbReference>
<dbReference type="Pfam" id="PF00466">
    <property type="entry name" value="Ribosomal_L10"/>
    <property type="match status" value="1"/>
</dbReference>
<dbReference type="SUPFAM" id="SSF160369">
    <property type="entry name" value="Ribosomal protein L10-like"/>
    <property type="match status" value="1"/>
</dbReference>
<dbReference type="PROSITE" id="PS01109">
    <property type="entry name" value="RIBOSOMAL_L10"/>
    <property type="match status" value="1"/>
</dbReference>
<comment type="function">
    <text evidence="1">Forms part of the ribosomal stalk, playing a central role in the interaction of the ribosome with GTP-bound translation factors.</text>
</comment>
<comment type="subunit">
    <text evidence="1">Part of the ribosomal stalk of the 50S ribosomal subunit. The N-terminus interacts with L11 and the large rRNA to form the base of the stalk. The C-terminus forms an elongated spine to which L12 dimers bind in a sequential fashion forming a multimeric L10(L12)X complex.</text>
</comment>
<comment type="similarity">
    <text evidence="1">Belongs to the universal ribosomal protein uL10 family.</text>
</comment>
<proteinExistence type="inferred from homology"/>
<feature type="chain" id="PRO_0000154660" description="Large ribosomal subunit protein uL10">
    <location>
        <begin position="1"/>
        <end position="163"/>
    </location>
</feature>